<accession>A1WWH7</accession>
<gene>
    <name evidence="1" type="primary">gpmA</name>
    <name type="ordered locus">Hhal_1264</name>
</gene>
<organism>
    <name type="scientific">Halorhodospira halophila (strain DSM 244 / SL1)</name>
    <name type="common">Ectothiorhodospira halophila (strain DSM 244 / SL1)</name>
    <dbReference type="NCBI Taxonomy" id="349124"/>
    <lineage>
        <taxon>Bacteria</taxon>
        <taxon>Pseudomonadati</taxon>
        <taxon>Pseudomonadota</taxon>
        <taxon>Gammaproteobacteria</taxon>
        <taxon>Chromatiales</taxon>
        <taxon>Ectothiorhodospiraceae</taxon>
        <taxon>Halorhodospira</taxon>
    </lineage>
</organism>
<dbReference type="EC" id="5.4.2.11" evidence="1"/>
<dbReference type="EMBL" id="CP000544">
    <property type="protein sequence ID" value="ABM62039.1"/>
    <property type="molecule type" value="Genomic_DNA"/>
</dbReference>
<dbReference type="RefSeq" id="WP_011814062.1">
    <property type="nucleotide sequence ID" value="NC_008789.1"/>
</dbReference>
<dbReference type="SMR" id="A1WWH7"/>
<dbReference type="STRING" id="349124.Hhal_1264"/>
<dbReference type="KEGG" id="hha:Hhal_1264"/>
<dbReference type="eggNOG" id="COG0588">
    <property type="taxonomic scope" value="Bacteria"/>
</dbReference>
<dbReference type="HOGENOM" id="CLU_033323_1_1_6"/>
<dbReference type="OrthoDB" id="9781415at2"/>
<dbReference type="UniPathway" id="UPA00109">
    <property type="reaction ID" value="UER00186"/>
</dbReference>
<dbReference type="Proteomes" id="UP000000647">
    <property type="component" value="Chromosome"/>
</dbReference>
<dbReference type="GO" id="GO:0004619">
    <property type="term" value="F:phosphoglycerate mutase activity"/>
    <property type="evidence" value="ECO:0007669"/>
    <property type="project" value="UniProtKB-EC"/>
</dbReference>
<dbReference type="GO" id="GO:0006094">
    <property type="term" value="P:gluconeogenesis"/>
    <property type="evidence" value="ECO:0007669"/>
    <property type="project" value="UniProtKB-UniRule"/>
</dbReference>
<dbReference type="GO" id="GO:0006096">
    <property type="term" value="P:glycolytic process"/>
    <property type="evidence" value="ECO:0007669"/>
    <property type="project" value="UniProtKB-UniRule"/>
</dbReference>
<dbReference type="CDD" id="cd07067">
    <property type="entry name" value="HP_PGM_like"/>
    <property type="match status" value="1"/>
</dbReference>
<dbReference type="FunFam" id="3.40.50.1240:FF:000003">
    <property type="entry name" value="2,3-bisphosphoglycerate-dependent phosphoglycerate mutase"/>
    <property type="match status" value="1"/>
</dbReference>
<dbReference type="Gene3D" id="3.40.50.1240">
    <property type="entry name" value="Phosphoglycerate mutase-like"/>
    <property type="match status" value="1"/>
</dbReference>
<dbReference type="HAMAP" id="MF_01039">
    <property type="entry name" value="PGAM_GpmA"/>
    <property type="match status" value="1"/>
</dbReference>
<dbReference type="InterPro" id="IPR013078">
    <property type="entry name" value="His_Pase_superF_clade-1"/>
</dbReference>
<dbReference type="InterPro" id="IPR029033">
    <property type="entry name" value="His_PPase_superfam"/>
</dbReference>
<dbReference type="InterPro" id="IPR001345">
    <property type="entry name" value="PG/BPGM_mutase_AS"/>
</dbReference>
<dbReference type="InterPro" id="IPR005952">
    <property type="entry name" value="Phosphogly_mut1"/>
</dbReference>
<dbReference type="NCBIfam" id="TIGR01258">
    <property type="entry name" value="pgm_1"/>
    <property type="match status" value="1"/>
</dbReference>
<dbReference type="NCBIfam" id="NF010713">
    <property type="entry name" value="PRK14115.1"/>
    <property type="match status" value="1"/>
</dbReference>
<dbReference type="PANTHER" id="PTHR11931">
    <property type="entry name" value="PHOSPHOGLYCERATE MUTASE"/>
    <property type="match status" value="1"/>
</dbReference>
<dbReference type="Pfam" id="PF00300">
    <property type="entry name" value="His_Phos_1"/>
    <property type="match status" value="1"/>
</dbReference>
<dbReference type="PIRSF" id="PIRSF000709">
    <property type="entry name" value="6PFK_2-Ptase"/>
    <property type="match status" value="1"/>
</dbReference>
<dbReference type="SMART" id="SM00855">
    <property type="entry name" value="PGAM"/>
    <property type="match status" value="1"/>
</dbReference>
<dbReference type="SUPFAM" id="SSF53254">
    <property type="entry name" value="Phosphoglycerate mutase-like"/>
    <property type="match status" value="1"/>
</dbReference>
<dbReference type="PROSITE" id="PS00175">
    <property type="entry name" value="PG_MUTASE"/>
    <property type="match status" value="1"/>
</dbReference>
<name>GPMA_HALHL</name>
<protein>
    <recommendedName>
        <fullName evidence="1">2,3-bisphosphoglycerate-dependent phosphoglycerate mutase</fullName>
        <shortName evidence="1">BPG-dependent PGAM</shortName>
        <shortName evidence="1">PGAM</shortName>
        <shortName evidence="1">Phosphoglyceromutase</shortName>
        <shortName evidence="1">dPGM</shortName>
        <ecNumber evidence="1">5.4.2.11</ecNumber>
    </recommendedName>
</protein>
<evidence type="ECO:0000255" key="1">
    <source>
        <dbReference type="HAMAP-Rule" id="MF_01039"/>
    </source>
</evidence>
<evidence type="ECO:0000256" key="2">
    <source>
        <dbReference type="SAM" id="MobiDB-lite"/>
    </source>
</evidence>
<sequence>MPKLVLLRHGQSIWNLENRFTGWYDVDLSDQGINEAREAGVALREAGIAPQVAYTSVLKRAIRTLWLSLAELDRMWIPEIKDWRLNERHYGALTGLNKAETAEQYGDEQVHIWRRSYDTPPPALDAEDERHPRHDPRYAGLDPQQLPGTESLKLTLERVLPCWEGEIAPALRQHDCVLIAAHGNSLRALVKHLDGLADDAIMKVEIPTGRPLVYELAEDLSVQRSYYVQD</sequence>
<feature type="chain" id="PRO_1000064065" description="2,3-bisphosphoglycerate-dependent phosphoglycerate mutase">
    <location>
        <begin position="1"/>
        <end position="230"/>
    </location>
</feature>
<feature type="region of interest" description="Disordered" evidence="2">
    <location>
        <begin position="117"/>
        <end position="143"/>
    </location>
</feature>
<feature type="compositionally biased region" description="Basic and acidic residues" evidence="2">
    <location>
        <begin position="128"/>
        <end position="137"/>
    </location>
</feature>
<feature type="active site" description="Tele-phosphohistidine intermediate" evidence="1">
    <location>
        <position position="9"/>
    </location>
</feature>
<feature type="active site" description="Proton donor/acceptor" evidence="1">
    <location>
        <position position="87"/>
    </location>
</feature>
<feature type="binding site" evidence="1">
    <location>
        <begin position="8"/>
        <end position="15"/>
    </location>
    <ligand>
        <name>substrate</name>
    </ligand>
</feature>
<feature type="binding site" evidence="1">
    <location>
        <begin position="21"/>
        <end position="22"/>
    </location>
    <ligand>
        <name>substrate</name>
    </ligand>
</feature>
<feature type="binding site" evidence="1">
    <location>
        <position position="60"/>
    </location>
    <ligand>
        <name>substrate</name>
    </ligand>
</feature>
<feature type="binding site" evidence="1">
    <location>
        <begin position="87"/>
        <end position="90"/>
    </location>
    <ligand>
        <name>substrate</name>
    </ligand>
</feature>
<feature type="binding site" evidence="1">
    <location>
        <position position="98"/>
    </location>
    <ligand>
        <name>substrate</name>
    </ligand>
</feature>
<feature type="binding site" evidence="1">
    <location>
        <begin position="114"/>
        <end position="115"/>
    </location>
    <ligand>
        <name>substrate</name>
    </ligand>
</feature>
<feature type="binding site" evidence="1">
    <location>
        <begin position="183"/>
        <end position="184"/>
    </location>
    <ligand>
        <name>substrate</name>
    </ligand>
</feature>
<feature type="site" description="Transition state stabilizer" evidence="1">
    <location>
        <position position="182"/>
    </location>
</feature>
<proteinExistence type="inferred from homology"/>
<keyword id="KW-0312">Gluconeogenesis</keyword>
<keyword id="KW-0324">Glycolysis</keyword>
<keyword id="KW-0413">Isomerase</keyword>
<keyword id="KW-1185">Reference proteome</keyword>
<reference key="1">
    <citation type="submission" date="2006-12" db="EMBL/GenBank/DDBJ databases">
        <title>Complete sequence of Halorhodospira halophila SL1.</title>
        <authorList>
            <consortium name="US DOE Joint Genome Institute"/>
            <person name="Copeland A."/>
            <person name="Lucas S."/>
            <person name="Lapidus A."/>
            <person name="Barry K."/>
            <person name="Detter J.C."/>
            <person name="Glavina del Rio T."/>
            <person name="Hammon N."/>
            <person name="Israni S."/>
            <person name="Dalin E."/>
            <person name="Tice H."/>
            <person name="Pitluck S."/>
            <person name="Saunders E."/>
            <person name="Brettin T."/>
            <person name="Bruce D."/>
            <person name="Han C."/>
            <person name="Tapia R."/>
            <person name="Schmutz J."/>
            <person name="Larimer F."/>
            <person name="Land M."/>
            <person name="Hauser L."/>
            <person name="Kyrpides N."/>
            <person name="Mikhailova N."/>
            <person name="Hoff W."/>
            <person name="Richardson P."/>
        </authorList>
    </citation>
    <scope>NUCLEOTIDE SEQUENCE [LARGE SCALE GENOMIC DNA]</scope>
    <source>
        <strain>DSM 244 / SL1</strain>
    </source>
</reference>
<comment type="function">
    <text evidence="1">Catalyzes the interconversion of 2-phosphoglycerate and 3-phosphoglycerate.</text>
</comment>
<comment type="catalytic activity">
    <reaction evidence="1">
        <text>(2R)-2-phosphoglycerate = (2R)-3-phosphoglycerate</text>
        <dbReference type="Rhea" id="RHEA:15901"/>
        <dbReference type="ChEBI" id="CHEBI:58272"/>
        <dbReference type="ChEBI" id="CHEBI:58289"/>
        <dbReference type="EC" id="5.4.2.11"/>
    </reaction>
</comment>
<comment type="pathway">
    <text evidence="1">Carbohydrate degradation; glycolysis; pyruvate from D-glyceraldehyde 3-phosphate: step 3/5.</text>
</comment>
<comment type="subunit">
    <text evidence="1">Homodimer.</text>
</comment>
<comment type="similarity">
    <text evidence="1">Belongs to the phosphoglycerate mutase family. BPG-dependent PGAM subfamily.</text>
</comment>